<proteinExistence type="evidence at protein level"/>
<sequence>MVNFTVDEIRGLMDKKRNIRNMSVIAHVDHGKSTLTDSLVSKAGIIAGAKAGETRFTDTRKDEQERCITIKSTAISMYFEVEEKDLVFITHPDQREKECKGFLINLIDSPGHVDFSSEVTAALRVTDGALVVVDCVSGVCVQTETVLRQAIAERIKPILFMNKMDRALLELQLDAEELYQTFQRIVENVNVIIATYNDDGGPMGEVRVDPSKGSVGFGSGLHGWAFTLKQFSEMYSEKFKIDVVKLMNRLWGENFFNAKTKKWQKQKEADNKRSFCMYILDPIYKVFDAIMNYKKEEIGTLLEKIGVTLKHEDKDKDGKALLKTVMRTWLPAGEALLQMIAIHLPSPVVAQKYRMEMLYEGPHDDEAAIAVKSCDPDGPLMMYISKMVPTSDKGRFYAFGRVFAGKVATGQKCRIMGPNYTPGKKEDLYEKAIQRTILMMGRYVEAIEDVPSGNICGLVGVDQFLVKTGTITTFKDAHNMKVMKFSVSPVVRVAVEPKNPADLPKLVEGLKRLAKSDPMVQCIIEESGEHIIAGAGELHLEICLKDLEEDHACIPLKKSDPVVSYRETVSEESDQMCLSKSPNKHNRLLMKALPMPDGLPEDIDNGDVSAKDEFKARARYLSEKYDYDVTEARKIWCFGPDGTGPNFILDCTKSVQYLNEIKDSVVAGFQWASKEGILADENLRGVRFNIYDVTLHADAIHRGGGQIIPTTRRCLYAAAITAKPRLMEPVYLCEIQCPEVAVGGIYGVLNRRRGHVFEENQVVGTPMFVVKAYLPVNESFGFTADLRSNTGGQAFPQCVFDHWQVLPGDPSEPSSKPYAIVQDTRKRKGLKEGLPDLSQYLDKL</sequence>
<evidence type="ECO:0000250" key="1"/>
<evidence type="ECO:0000250" key="2">
    <source>
        <dbReference type="UniProtKB" id="P13639"/>
    </source>
</evidence>
<evidence type="ECO:0000250" key="3">
    <source>
        <dbReference type="UniProtKB" id="P32324"/>
    </source>
</evidence>
<evidence type="ECO:0000255" key="4">
    <source>
        <dbReference type="PROSITE-ProRule" id="PRU01059"/>
    </source>
</evidence>
<evidence type="ECO:0000269" key="5">
    <source>
    </source>
</evidence>
<evidence type="ECO:0000303" key="6">
    <source>
    </source>
</evidence>
<evidence type="ECO:0000303" key="7">
    <source>
    </source>
</evidence>
<evidence type="ECO:0000305" key="8"/>
<evidence type="ECO:0000312" key="9">
    <source>
        <dbReference type="FlyBase" id="FBgn0000559"/>
    </source>
</evidence>
<gene>
    <name evidence="6 9" type="primary">eEF2</name>
    <name evidence="7" type="synonym">EF2</name>
    <name evidence="9" type="synonym">Ef2b</name>
    <name evidence="9" type="ORF">CG2238</name>
</gene>
<dbReference type="EC" id="3.6.5.-" evidence="3"/>
<dbReference type="EMBL" id="X15805">
    <property type="protein sequence ID" value="CAA33804.1"/>
    <property type="molecule type" value="mRNA"/>
</dbReference>
<dbReference type="EMBL" id="AE014134">
    <property type="protein sequence ID" value="AAF57226.2"/>
    <property type="molecule type" value="Genomic_DNA"/>
</dbReference>
<dbReference type="EMBL" id="AE014134">
    <property type="protein sequence ID" value="AAG22125.3"/>
    <property type="molecule type" value="Genomic_DNA"/>
</dbReference>
<dbReference type="EMBL" id="AE014134">
    <property type="protein sequence ID" value="AAN11135.2"/>
    <property type="molecule type" value="Genomic_DNA"/>
</dbReference>
<dbReference type="EMBL" id="AY075481">
    <property type="protein sequence ID" value="AAL68292.1"/>
    <property type="molecule type" value="mRNA"/>
</dbReference>
<dbReference type="PIR" id="S05988">
    <property type="entry name" value="S05988"/>
</dbReference>
<dbReference type="RefSeq" id="NP_525105.2">
    <property type="nucleotide sequence ID" value="NM_080366.3"/>
</dbReference>
<dbReference type="RefSeq" id="NP_724357.2">
    <property type="nucleotide sequence ID" value="NM_165394.3"/>
</dbReference>
<dbReference type="RefSeq" id="NP_724358.2">
    <property type="nucleotide sequence ID" value="NM_165395.2"/>
</dbReference>
<dbReference type="PDB" id="4V6W">
    <property type="method" value="EM"/>
    <property type="resolution" value="6.00 A"/>
    <property type="chains" value="Az=1-844"/>
</dbReference>
<dbReference type="PDBsum" id="4V6W"/>
<dbReference type="SMR" id="P13060"/>
<dbReference type="BioGRID" id="61367">
    <property type="interactions" value="160"/>
</dbReference>
<dbReference type="DIP" id="DIP-19881N"/>
<dbReference type="FunCoup" id="P13060">
    <property type="interactions" value="1469"/>
</dbReference>
<dbReference type="IntAct" id="P13060">
    <property type="interactions" value="14"/>
</dbReference>
<dbReference type="MINT" id="P13060"/>
<dbReference type="STRING" id="7227.FBpp0305182"/>
<dbReference type="PaxDb" id="7227-FBpp0305182"/>
<dbReference type="DNASU" id="35422"/>
<dbReference type="EnsemblMetazoa" id="FBtr0085911">
    <property type="protein sequence ID" value="FBpp0085265"/>
    <property type="gene ID" value="FBgn0000559"/>
</dbReference>
<dbReference type="EnsemblMetazoa" id="FBtr0085912">
    <property type="protein sequence ID" value="FBpp0085266"/>
    <property type="gene ID" value="FBgn0000559"/>
</dbReference>
<dbReference type="EnsemblMetazoa" id="FBtr0332966">
    <property type="protein sequence ID" value="FBpp0305182"/>
    <property type="gene ID" value="FBgn0000559"/>
</dbReference>
<dbReference type="GeneID" id="35422"/>
<dbReference type="KEGG" id="dme:Dmel_CG2238"/>
<dbReference type="AGR" id="FB:FBgn0000559"/>
<dbReference type="CTD" id="1938"/>
<dbReference type="FlyBase" id="FBgn0000559">
    <property type="gene designation" value="eEF2"/>
</dbReference>
<dbReference type="VEuPathDB" id="VectorBase:FBgn0000559"/>
<dbReference type="eggNOG" id="KOG0469">
    <property type="taxonomic scope" value="Eukaryota"/>
</dbReference>
<dbReference type="GeneTree" id="ENSGT00940000154662"/>
<dbReference type="HOGENOM" id="CLU_002794_11_2_1"/>
<dbReference type="InParanoid" id="P13060"/>
<dbReference type="OMA" id="ASWNTEN"/>
<dbReference type="OrthoDB" id="364892at2759"/>
<dbReference type="PhylomeDB" id="P13060"/>
<dbReference type="Reactome" id="R-DME-156902">
    <property type="pathway name" value="Peptide chain elongation"/>
</dbReference>
<dbReference type="Reactome" id="R-DME-5358493">
    <property type="pathway name" value="Synthesis of diphthamide-EEF2"/>
</dbReference>
<dbReference type="Reactome" id="R-DME-6798695">
    <property type="pathway name" value="Neutrophil degranulation"/>
</dbReference>
<dbReference type="Reactome" id="R-DME-8876725">
    <property type="pathway name" value="Protein methylation"/>
</dbReference>
<dbReference type="SignaLink" id="P13060"/>
<dbReference type="BioGRID-ORCS" id="35422">
    <property type="hits" value="1 hit in 1 CRISPR screen"/>
</dbReference>
<dbReference type="ChiTaRS" id="EF2">
    <property type="organism name" value="fly"/>
</dbReference>
<dbReference type="GenomeRNAi" id="35422"/>
<dbReference type="PRO" id="PR:P13060"/>
<dbReference type="Proteomes" id="UP000000803">
    <property type="component" value="Chromosome 2L"/>
</dbReference>
<dbReference type="Bgee" id="FBgn0000559">
    <property type="expression patterns" value="Expressed in oviduct (Drosophila) and 291 other cell types or tissues"/>
</dbReference>
<dbReference type="GO" id="GO:0005829">
    <property type="term" value="C:cytosol"/>
    <property type="evidence" value="ECO:0000250"/>
    <property type="project" value="FlyBase"/>
</dbReference>
<dbReference type="GO" id="GO:1990904">
    <property type="term" value="C:ribonucleoprotein complex"/>
    <property type="evidence" value="ECO:0000318"/>
    <property type="project" value="GO_Central"/>
</dbReference>
<dbReference type="GO" id="GO:0005525">
    <property type="term" value="F:GTP binding"/>
    <property type="evidence" value="ECO:0007669"/>
    <property type="project" value="UniProtKB-KW"/>
</dbReference>
<dbReference type="GO" id="GO:0003924">
    <property type="term" value="F:GTPase activity"/>
    <property type="evidence" value="ECO:0000318"/>
    <property type="project" value="GO_Central"/>
</dbReference>
<dbReference type="GO" id="GO:0043022">
    <property type="term" value="F:ribosome binding"/>
    <property type="evidence" value="ECO:0000318"/>
    <property type="project" value="GO_Central"/>
</dbReference>
<dbReference type="GO" id="GO:0003746">
    <property type="term" value="F:translation elongation factor activity"/>
    <property type="evidence" value="ECO:0000250"/>
    <property type="project" value="FlyBase"/>
</dbReference>
<dbReference type="GO" id="GO:0006414">
    <property type="term" value="P:translational elongation"/>
    <property type="evidence" value="ECO:0000250"/>
    <property type="project" value="FlyBase"/>
</dbReference>
<dbReference type="CDD" id="cd01681">
    <property type="entry name" value="aeEF2_snRNP_like_IV"/>
    <property type="match status" value="1"/>
</dbReference>
<dbReference type="CDD" id="cd04096">
    <property type="entry name" value="eEF2_snRNP_like_C"/>
    <property type="match status" value="1"/>
</dbReference>
<dbReference type="CDD" id="cd01885">
    <property type="entry name" value="EF2"/>
    <property type="match status" value="1"/>
</dbReference>
<dbReference type="CDD" id="cd16261">
    <property type="entry name" value="EF2_snRNP_III"/>
    <property type="match status" value="1"/>
</dbReference>
<dbReference type="CDD" id="cd03700">
    <property type="entry name" value="EF2_snRNP_like_II"/>
    <property type="match status" value="1"/>
</dbReference>
<dbReference type="FunFam" id="2.40.30.10:FF:000010">
    <property type="entry name" value="Translation elongation factor 2"/>
    <property type="match status" value="1"/>
</dbReference>
<dbReference type="FunFam" id="3.30.230.10:FF:000006">
    <property type="entry name" value="Translation elongation factor 2"/>
    <property type="match status" value="1"/>
</dbReference>
<dbReference type="FunFam" id="3.30.70.240:FF:000003">
    <property type="entry name" value="Translation elongation factor 2"/>
    <property type="match status" value="1"/>
</dbReference>
<dbReference type="FunFam" id="3.30.70.870:FF:000002">
    <property type="entry name" value="Translation elongation factor 2"/>
    <property type="match status" value="1"/>
</dbReference>
<dbReference type="FunFam" id="3.40.50.300:FF:000058">
    <property type="entry name" value="Translation elongation factor 2"/>
    <property type="match status" value="1"/>
</dbReference>
<dbReference type="Gene3D" id="3.30.230.10">
    <property type="match status" value="1"/>
</dbReference>
<dbReference type="Gene3D" id="3.30.70.240">
    <property type="match status" value="1"/>
</dbReference>
<dbReference type="Gene3D" id="3.30.70.870">
    <property type="entry name" value="Elongation Factor G (Translational Gtpase), domain 3"/>
    <property type="match status" value="1"/>
</dbReference>
<dbReference type="Gene3D" id="3.40.50.300">
    <property type="entry name" value="P-loop containing nucleotide triphosphate hydrolases"/>
    <property type="match status" value="1"/>
</dbReference>
<dbReference type="Gene3D" id="2.40.30.10">
    <property type="entry name" value="Translation factors"/>
    <property type="match status" value="1"/>
</dbReference>
<dbReference type="InterPro" id="IPR041095">
    <property type="entry name" value="EFG_II"/>
</dbReference>
<dbReference type="InterPro" id="IPR035647">
    <property type="entry name" value="EFG_III/V"/>
</dbReference>
<dbReference type="InterPro" id="IPR000640">
    <property type="entry name" value="EFG_V-like"/>
</dbReference>
<dbReference type="InterPro" id="IPR004161">
    <property type="entry name" value="EFTu-like_2"/>
</dbReference>
<dbReference type="InterPro" id="IPR031157">
    <property type="entry name" value="G_TR_CS"/>
</dbReference>
<dbReference type="InterPro" id="IPR027417">
    <property type="entry name" value="P-loop_NTPase"/>
</dbReference>
<dbReference type="InterPro" id="IPR020568">
    <property type="entry name" value="Ribosomal_Su5_D2-typ_SF"/>
</dbReference>
<dbReference type="InterPro" id="IPR014721">
    <property type="entry name" value="Ribsml_uS5_D2-typ_fold_subgr"/>
</dbReference>
<dbReference type="InterPro" id="IPR005225">
    <property type="entry name" value="Small_GTP-bd"/>
</dbReference>
<dbReference type="InterPro" id="IPR000795">
    <property type="entry name" value="T_Tr_GTP-bd_dom"/>
</dbReference>
<dbReference type="InterPro" id="IPR009000">
    <property type="entry name" value="Transl_B-barrel_sf"/>
</dbReference>
<dbReference type="InterPro" id="IPR005517">
    <property type="entry name" value="Transl_elong_EFG/EF2_IV"/>
</dbReference>
<dbReference type="NCBIfam" id="TIGR00231">
    <property type="entry name" value="small_GTP"/>
    <property type="match status" value="1"/>
</dbReference>
<dbReference type="PANTHER" id="PTHR42908:SF10">
    <property type="entry name" value="EUKARYOTIC TRANSLATION ELONGATION FACTOR 2"/>
    <property type="match status" value="1"/>
</dbReference>
<dbReference type="PANTHER" id="PTHR42908">
    <property type="entry name" value="TRANSLATION ELONGATION FACTOR-RELATED"/>
    <property type="match status" value="1"/>
</dbReference>
<dbReference type="Pfam" id="PF00679">
    <property type="entry name" value="EFG_C"/>
    <property type="match status" value="1"/>
</dbReference>
<dbReference type="Pfam" id="PF14492">
    <property type="entry name" value="EFG_III"/>
    <property type="match status" value="1"/>
</dbReference>
<dbReference type="Pfam" id="PF03764">
    <property type="entry name" value="EFG_IV"/>
    <property type="match status" value="1"/>
</dbReference>
<dbReference type="Pfam" id="PF00009">
    <property type="entry name" value="GTP_EFTU"/>
    <property type="match status" value="1"/>
</dbReference>
<dbReference type="Pfam" id="PF03144">
    <property type="entry name" value="GTP_EFTU_D2"/>
    <property type="match status" value="1"/>
</dbReference>
<dbReference type="PRINTS" id="PR00315">
    <property type="entry name" value="ELONGATNFCT"/>
</dbReference>
<dbReference type="SMART" id="SM00838">
    <property type="entry name" value="EFG_C"/>
    <property type="match status" value="1"/>
</dbReference>
<dbReference type="SMART" id="SM00889">
    <property type="entry name" value="EFG_IV"/>
    <property type="match status" value="1"/>
</dbReference>
<dbReference type="SUPFAM" id="SSF54980">
    <property type="entry name" value="EF-G C-terminal domain-like"/>
    <property type="match status" value="2"/>
</dbReference>
<dbReference type="SUPFAM" id="SSF52540">
    <property type="entry name" value="P-loop containing nucleoside triphosphate hydrolases"/>
    <property type="match status" value="1"/>
</dbReference>
<dbReference type="SUPFAM" id="SSF54211">
    <property type="entry name" value="Ribosomal protein S5 domain 2-like"/>
    <property type="match status" value="1"/>
</dbReference>
<dbReference type="SUPFAM" id="SSF50447">
    <property type="entry name" value="Translation proteins"/>
    <property type="match status" value="1"/>
</dbReference>
<dbReference type="PROSITE" id="PS00301">
    <property type="entry name" value="G_TR_1"/>
    <property type="match status" value="1"/>
</dbReference>
<dbReference type="PROSITE" id="PS51722">
    <property type="entry name" value="G_TR_2"/>
    <property type="match status" value="1"/>
</dbReference>
<comment type="function">
    <text evidence="3">Catalyzes the GTP-dependent ribosomal translocation step during translation elongation. During this step, the ribosome changes from the pre-translocational (PRE) to the post-translocational (POST) state as the newly formed A-site-bound peptidyl-tRNA and P-site-bound deacylated tRNA move to the P and E sites, respectively. Catalyzes the coordinated movement of the two tRNA molecules, the mRNA and conformational changes in the ribosome.</text>
</comment>
<comment type="catalytic activity">
    <reaction evidence="3">
        <text>GTP + H2O = GDP + phosphate + H(+)</text>
        <dbReference type="Rhea" id="RHEA:19669"/>
        <dbReference type="ChEBI" id="CHEBI:15377"/>
        <dbReference type="ChEBI" id="CHEBI:15378"/>
        <dbReference type="ChEBI" id="CHEBI:37565"/>
        <dbReference type="ChEBI" id="CHEBI:43474"/>
        <dbReference type="ChEBI" id="CHEBI:58189"/>
    </reaction>
    <physiologicalReaction direction="left-to-right" evidence="3">
        <dbReference type="Rhea" id="RHEA:19670"/>
    </physiologicalReaction>
</comment>
<comment type="subcellular location">
    <subcellularLocation>
        <location evidence="3">Cytoplasm</location>
    </subcellularLocation>
</comment>
<comment type="developmental stage">
    <text evidence="5">Expression commences during embryonic germ band elongation and persists throughout development and in the adult. Highest level of expression observed in late embryonic, late larval and early pupal stages.</text>
</comment>
<comment type="PTM">
    <text evidence="2">Phosphorylation by EF-2 kinase completely inactivates eEF2.</text>
</comment>
<comment type="similarity">
    <text evidence="4">Belongs to the TRAFAC class translation factor GTPase superfamily. Classic translation factor GTPase family. EF-G/EF-2 subfamily.</text>
</comment>
<organism>
    <name type="scientific">Drosophila melanogaster</name>
    <name type="common">Fruit fly</name>
    <dbReference type="NCBI Taxonomy" id="7227"/>
    <lineage>
        <taxon>Eukaryota</taxon>
        <taxon>Metazoa</taxon>
        <taxon>Ecdysozoa</taxon>
        <taxon>Arthropoda</taxon>
        <taxon>Hexapoda</taxon>
        <taxon>Insecta</taxon>
        <taxon>Pterygota</taxon>
        <taxon>Neoptera</taxon>
        <taxon>Endopterygota</taxon>
        <taxon>Diptera</taxon>
        <taxon>Brachycera</taxon>
        <taxon>Muscomorpha</taxon>
        <taxon>Ephydroidea</taxon>
        <taxon>Drosophilidae</taxon>
        <taxon>Drosophila</taxon>
        <taxon>Sophophora</taxon>
    </lineage>
</organism>
<protein>
    <recommendedName>
        <fullName evidence="9">Eukaryotic translation elongation factor 2</fullName>
        <ecNumber evidence="3">3.6.5.-</ecNumber>
    </recommendedName>
    <alternativeName>
        <fullName evidence="7">Elongation factor 2</fullName>
        <shortName evidence="8">EF-2</shortName>
    </alternativeName>
</protein>
<feature type="initiator methionine" description="Removed" evidence="1">
    <location>
        <position position="1"/>
    </location>
</feature>
<feature type="chain" id="PRO_0000091012" description="Eukaryotic translation elongation factor 2">
    <location>
        <begin position="2"/>
        <end position="844"/>
    </location>
</feature>
<feature type="domain" description="tr-type G" evidence="4">
    <location>
        <begin position="17"/>
        <end position="348"/>
    </location>
</feature>
<feature type="binding site" evidence="3">
    <location>
        <begin position="26"/>
        <end position="33"/>
    </location>
    <ligand>
        <name>GTP</name>
        <dbReference type="ChEBI" id="CHEBI:37565"/>
    </ligand>
</feature>
<feature type="binding site" evidence="3">
    <location>
        <begin position="162"/>
        <end position="165"/>
    </location>
    <ligand>
        <name>GTP</name>
        <dbReference type="ChEBI" id="CHEBI:37565"/>
    </ligand>
</feature>
<feature type="binding site" evidence="3">
    <location>
        <begin position="219"/>
        <end position="221"/>
    </location>
    <ligand>
        <name>GTP</name>
        <dbReference type="ChEBI" id="CHEBI:37565"/>
    </ligand>
</feature>
<feature type="modified residue" description="Phosphothreonine" evidence="2">
    <location>
        <position position="57"/>
    </location>
</feature>
<feature type="modified residue" description="Phosphothreonine" evidence="2">
    <location>
        <position position="59"/>
    </location>
</feature>
<feature type="modified residue" description="Diphthamide" evidence="3">
    <location>
        <position position="701"/>
    </location>
</feature>
<feature type="sequence conflict" description="In Ref. 1; CAA33804." evidence="8" ref="1">
    <original>D</original>
    <variation>E</variation>
    <location>
        <position position="607"/>
    </location>
</feature>
<accession>P13060</accession>
<accession>A0A023GPJ5</accession>
<accession>Q9I7H2</accession>
<accession>Q9V9R0</accession>
<name>EF2_DROME</name>
<keyword id="KW-0002">3D-structure</keyword>
<keyword id="KW-0963">Cytoplasm</keyword>
<keyword id="KW-0251">Elongation factor</keyword>
<keyword id="KW-0342">GTP-binding</keyword>
<keyword id="KW-0378">Hydrolase</keyword>
<keyword id="KW-0547">Nucleotide-binding</keyword>
<keyword id="KW-0597">Phosphoprotein</keyword>
<keyword id="KW-0648">Protein biosynthesis</keyword>
<keyword id="KW-1185">Reference proteome</keyword>
<reference key="1">
    <citation type="journal article" date="1989" name="Nucleic Acids Res.">
        <title>Isolation and characterization of the Drosophila translational elongation factor 2 gene.</title>
        <authorList>
            <person name="Grinblat Y."/>
            <person name="Brown N.H."/>
            <person name="Kafatos F.C."/>
        </authorList>
    </citation>
    <scope>NUCLEOTIDE SEQUENCE [MRNA]</scope>
    <scope>DEVELOPMENTAL STAGE</scope>
    <source>
        <tissue>Embryo</tissue>
    </source>
</reference>
<reference key="2">
    <citation type="journal article" date="2000" name="Science">
        <title>The genome sequence of Drosophila melanogaster.</title>
        <authorList>
            <person name="Adams M.D."/>
            <person name="Celniker S.E."/>
            <person name="Holt R.A."/>
            <person name="Evans C.A."/>
            <person name="Gocayne J.D."/>
            <person name="Amanatides P.G."/>
            <person name="Scherer S.E."/>
            <person name="Li P.W."/>
            <person name="Hoskins R.A."/>
            <person name="Galle R.F."/>
            <person name="George R.A."/>
            <person name="Lewis S.E."/>
            <person name="Richards S."/>
            <person name="Ashburner M."/>
            <person name="Henderson S.N."/>
            <person name="Sutton G.G."/>
            <person name="Wortman J.R."/>
            <person name="Yandell M.D."/>
            <person name="Zhang Q."/>
            <person name="Chen L.X."/>
            <person name="Brandon R.C."/>
            <person name="Rogers Y.-H.C."/>
            <person name="Blazej R.G."/>
            <person name="Champe M."/>
            <person name="Pfeiffer B.D."/>
            <person name="Wan K.H."/>
            <person name="Doyle C."/>
            <person name="Baxter E.G."/>
            <person name="Helt G."/>
            <person name="Nelson C.R."/>
            <person name="Miklos G.L.G."/>
            <person name="Abril J.F."/>
            <person name="Agbayani A."/>
            <person name="An H.-J."/>
            <person name="Andrews-Pfannkoch C."/>
            <person name="Baldwin D."/>
            <person name="Ballew R.M."/>
            <person name="Basu A."/>
            <person name="Baxendale J."/>
            <person name="Bayraktaroglu L."/>
            <person name="Beasley E.M."/>
            <person name="Beeson K.Y."/>
            <person name="Benos P.V."/>
            <person name="Berman B.P."/>
            <person name="Bhandari D."/>
            <person name="Bolshakov S."/>
            <person name="Borkova D."/>
            <person name="Botchan M.R."/>
            <person name="Bouck J."/>
            <person name="Brokstein P."/>
            <person name="Brottier P."/>
            <person name="Burtis K.C."/>
            <person name="Busam D.A."/>
            <person name="Butler H."/>
            <person name="Cadieu E."/>
            <person name="Center A."/>
            <person name="Chandra I."/>
            <person name="Cherry J.M."/>
            <person name="Cawley S."/>
            <person name="Dahlke C."/>
            <person name="Davenport L.B."/>
            <person name="Davies P."/>
            <person name="de Pablos B."/>
            <person name="Delcher A."/>
            <person name="Deng Z."/>
            <person name="Mays A.D."/>
            <person name="Dew I."/>
            <person name="Dietz S.M."/>
            <person name="Dodson K."/>
            <person name="Doup L.E."/>
            <person name="Downes M."/>
            <person name="Dugan-Rocha S."/>
            <person name="Dunkov B.C."/>
            <person name="Dunn P."/>
            <person name="Durbin K.J."/>
            <person name="Evangelista C.C."/>
            <person name="Ferraz C."/>
            <person name="Ferriera S."/>
            <person name="Fleischmann W."/>
            <person name="Fosler C."/>
            <person name="Gabrielian A.E."/>
            <person name="Garg N.S."/>
            <person name="Gelbart W.M."/>
            <person name="Glasser K."/>
            <person name="Glodek A."/>
            <person name="Gong F."/>
            <person name="Gorrell J.H."/>
            <person name="Gu Z."/>
            <person name="Guan P."/>
            <person name="Harris M."/>
            <person name="Harris N.L."/>
            <person name="Harvey D.A."/>
            <person name="Heiman T.J."/>
            <person name="Hernandez J.R."/>
            <person name="Houck J."/>
            <person name="Hostin D."/>
            <person name="Houston K.A."/>
            <person name="Howland T.J."/>
            <person name="Wei M.-H."/>
            <person name="Ibegwam C."/>
            <person name="Jalali M."/>
            <person name="Kalush F."/>
            <person name="Karpen G.H."/>
            <person name="Ke Z."/>
            <person name="Kennison J.A."/>
            <person name="Ketchum K.A."/>
            <person name="Kimmel B.E."/>
            <person name="Kodira C.D."/>
            <person name="Kraft C.L."/>
            <person name="Kravitz S."/>
            <person name="Kulp D."/>
            <person name="Lai Z."/>
            <person name="Lasko P."/>
            <person name="Lei Y."/>
            <person name="Levitsky A.A."/>
            <person name="Li J.H."/>
            <person name="Li Z."/>
            <person name="Liang Y."/>
            <person name="Lin X."/>
            <person name="Liu X."/>
            <person name="Mattei B."/>
            <person name="McIntosh T.C."/>
            <person name="McLeod M.P."/>
            <person name="McPherson D."/>
            <person name="Merkulov G."/>
            <person name="Milshina N.V."/>
            <person name="Mobarry C."/>
            <person name="Morris J."/>
            <person name="Moshrefi A."/>
            <person name="Mount S.M."/>
            <person name="Moy M."/>
            <person name="Murphy B."/>
            <person name="Murphy L."/>
            <person name="Muzny D.M."/>
            <person name="Nelson D.L."/>
            <person name="Nelson D.R."/>
            <person name="Nelson K.A."/>
            <person name="Nixon K."/>
            <person name="Nusskern D.R."/>
            <person name="Pacleb J.M."/>
            <person name="Palazzolo M."/>
            <person name="Pittman G.S."/>
            <person name="Pan S."/>
            <person name="Pollard J."/>
            <person name="Puri V."/>
            <person name="Reese M.G."/>
            <person name="Reinert K."/>
            <person name="Remington K."/>
            <person name="Saunders R.D.C."/>
            <person name="Scheeler F."/>
            <person name="Shen H."/>
            <person name="Shue B.C."/>
            <person name="Siden-Kiamos I."/>
            <person name="Simpson M."/>
            <person name="Skupski M.P."/>
            <person name="Smith T.J."/>
            <person name="Spier E."/>
            <person name="Spradling A.C."/>
            <person name="Stapleton M."/>
            <person name="Strong R."/>
            <person name="Sun E."/>
            <person name="Svirskas R."/>
            <person name="Tector C."/>
            <person name="Turner R."/>
            <person name="Venter E."/>
            <person name="Wang A.H."/>
            <person name="Wang X."/>
            <person name="Wang Z.-Y."/>
            <person name="Wassarman D.A."/>
            <person name="Weinstock G.M."/>
            <person name="Weissenbach J."/>
            <person name="Williams S.M."/>
            <person name="Woodage T."/>
            <person name="Worley K.C."/>
            <person name="Wu D."/>
            <person name="Yang S."/>
            <person name="Yao Q.A."/>
            <person name="Ye J."/>
            <person name="Yeh R.-F."/>
            <person name="Zaveri J.S."/>
            <person name="Zhan M."/>
            <person name="Zhang G."/>
            <person name="Zhao Q."/>
            <person name="Zheng L."/>
            <person name="Zheng X.H."/>
            <person name="Zhong F.N."/>
            <person name="Zhong W."/>
            <person name="Zhou X."/>
            <person name="Zhu S.C."/>
            <person name="Zhu X."/>
            <person name="Smith H.O."/>
            <person name="Gibbs R.A."/>
            <person name="Myers E.W."/>
            <person name="Rubin G.M."/>
            <person name="Venter J.C."/>
        </authorList>
    </citation>
    <scope>NUCLEOTIDE SEQUENCE [LARGE SCALE GENOMIC DNA]</scope>
    <source>
        <strain>Berkeley</strain>
    </source>
</reference>
<reference key="3">
    <citation type="journal article" date="2002" name="Genome Biol.">
        <title>Annotation of the Drosophila melanogaster euchromatic genome: a systematic review.</title>
        <authorList>
            <person name="Misra S."/>
            <person name="Crosby M.A."/>
            <person name="Mungall C.J."/>
            <person name="Matthews B.B."/>
            <person name="Campbell K.S."/>
            <person name="Hradecky P."/>
            <person name="Huang Y."/>
            <person name="Kaminker J.S."/>
            <person name="Millburn G.H."/>
            <person name="Prochnik S.E."/>
            <person name="Smith C.D."/>
            <person name="Tupy J.L."/>
            <person name="Whitfield E.J."/>
            <person name="Bayraktaroglu L."/>
            <person name="Berman B.P."/>
            <person name="Bettencourt B.R."/>
            <person name="Celniker S.E."/>
            <person name="de Grey A.D.N.J."/>
            <person name="Drysdale R.A."/>
            <person name="Harris N.L."/>
            <person name="Richter J."/>
            <person name="Russo S."/>
            <person name="Schroeder A.J."/>
            <person name="Shu S.Q."/>
            <person name="Stapleton M."/>
            <person name="Yamada C."/>
            <person name="Ashburner M."/>
            <person name="Gelbart W.M."/>
            <person name="Rubin G.M."/>
            <person name="Lewis S.E."/>
        </authorList>
    </citation>
    <scope>GENOME REANNOTATION</scope>
    <scope>ALTERNATIVE SPLICING</scope>
    <source>
        <strain>Berkeley</strain>
    </source>
</reference>
<reference key="4">
    <citation type="journal article" date="2002" name="Genome Biol.">
        <title>A Drosophila full-length cDNA resource.</title>
        <authorList>
            <person name="Stapleton M."/>
            <person name="Carlson J.W."/>
            <person name="Brokstein P."/>
            <person name="Yu C."/>
            <person name="Champe M."/>
            <person name="George R.A."/>
            <person name="Guarin H."/>
            <person name="Kronmiller B."/>
            <person name="Pacleb J.M."/>
            <person name="Park S."/>
            <person name="Wan K.H."/>
            <person name="Rubin G.M."/>
            <person name="Celniker S.E."/>
        </authorList>
    </citation>
    <scope>NUCLEOTIDE SEQUENCE [LARGE SCALE MRNA]</scope>
    <source>
        <strain>Berkeley</strain>
        <tissue>Embryo</tissue>
    </source>
</reference>
<reference key="5">
    <citation type="journal article" date="2013" name="Nature">
        <title>Structures of the human and Drosophila 80S ribosome.</title>
        <authorList>
            <person name="Anger A.M."/>
            <person name="Armache J.P."/>
            <person name="Berninghausen O."/>
            <person name="Habeck M."/>
            <person name="Subklewe M."/>
            <person name="Wilson D.N."/>
            <person name="Beckmann R."/>
        </authorList>
    </citation>
    <scope>STRUCTURE BY ELECTRON MICROSCOPY (6.0 ANGSTROMS) IN COMPLEX WITH THE 80S RIBOSOME</scope>
</reference>